<proteinExistence type="predicted"/>
<protein>
    <recommendedName>
        <fullName>Probable protein L3</fullName>
    </recommendedName>
</protein>
<accession>P26541</accession>
<dbReference type="EMBL" id="D90252">
    <property type="protein sequence ID" value="BAA14299.1"/>
    <property type="molecule type" value="Genomic_DNA"/>
</dbReference>
<dbReference type="PIR" id="I40480">
    <property type="entry name" value="P3WLB5"/>
</dbReference>
<dbReference type="Proteomes" id="UP000007669">
    <property type="component" value="Genome"/>
</dbReference>
<reference key="1">
    <citation type="journal article" date="1991" name="Virology">
        <title>A subtype of human papillomavirus 5 (HPV-5b) and its subgenomic segment amplified in a carcinoma: nucleotide sequences and genomic organizations.</title>
        <authorList>
            <person name="Yabe Y."/>
            <person name="Sakai A."/>
            <person name="Hitsumoto T."/>
            <person name="Kato H."/>
            <person name="Ogura H."/>
        </authorList>
    </citation>
    <scope>NUCLEOTIDE SEQUENCE [GENOMIC DNA]</scope>
</reference>
<feature type="chain" id="PRO_0000133642" description="Probable protein L3">
    <location>
        <begin position="1"/>
        <end position="110"/>
    </location>
</feature>
<organism>
    <name type="scientific">Human papillomavirus type 5b</name>
    <dbReference type="NCBI Taxonomy" id="10599"/>
    <lineage>
        <taxon>Viruses</taxon>
        <taxon>Monodnaviria</taxon>
        <taxon>Shotokuvirae</taxon>
        <taxon>Cossaviricota</taxon>
        <taxon>Papovaviricetes</taxon>
        <taxon>Zurhausenvirales</taxon>
        <taxon>Papillomaviridae</taxon>
        <taxon>Firstpapillomavirinae</taxon>
        <taxon>Betapapillomavirus</taxon>
        <taxon>Betapapillomavirus 1</taxon>
    </lineage>
</organism>
<organismHost>
    <name type="scientific">Homo sapiens</name>
    <name type="common">Human</name>
    <dbReference type="NCBI Taxonomy" id="9606"/>
</organismHost>
<name>VL3_HPV5B</name>
<sequence length="110" mass="13103">MVHIIPKTQRDIMLLIRSHVIMQKSFILHLTFLWSLYTLMTIQGTFIYIPVFAGANVKENICDLHCRWQCGTRLMVKYTFHHRHRWPESKAPMNTFKEQISTIMHLVTDC</sequence>
<keyword id="KW-0426">Late protein</keyword>